<comment type="function">
    <text evidence="1">Associates with the EF-Tu.GDP complex and induces the exchange of GDP to GTP. It remains bound to the aminoacyl-tRNA.EF-Tu.GTP complex up to the GTP hydrolysis stage on the ribosome.</text>
</comment>
<comment type="subcellular location">
    <subcellularLocation>
        <location evidence="1">Cytoplasm</location>
    </subcellularLocation>
</comment>
<comment type="similarity">
    <text evidence="1">Belongs to the EF-Ts family.</text>
</comment>
<protein>
    <recommendedName>
        <fullName evidence="1">Elongation factor Ts</fullName>
        <shortName evidence="1">EF-Ts</shortName>
    </recommendedName>
</protein>
<reference key="1">
    <citation type="journal article" date="2007" name="PLoS ONE">
        <title>Analysis of the neurotoxin complex genes in Clostridium botulinum A1-A4 and B1 strains: BoNT/A3, /Ba4 and /B1 clusters are located within plasmids.</title>
        <authorList>
            <person name="Smith T.J."/>
            <person name="Hill K.K."/>
            <person name="Foley B.T."/>
            <person name="Detter J.C."/>
            <person name="Munk A.C."/>
            <person name="Bruce D.C."/>
            <person name="Doggett N.A."/>
            <person name="Smith L.A."/>
            <person name="Marks J.D."/>
            <person name="Xie G."/>
            <person name="Brettin T.S."/>
        </authorList>
    </citation>
    <scope>NUCLEOTIDE SEQUENCE [LARGE SCALE GENOMIC DNA]</scope>
    <source>
        <strain>Loch Maree / Type A3</strain>
    </source>
</reference>
<gene>
    <name evidence="1" type="primary">tsf</name>
    <name type="ordered locus">CLK_1811</name>
</gene>
<feature type="chain" id="PRO_1000116717" description="Elongation factor Ts">
    <location>
        <begin position="1"/>
        <end position="307"/>
    </location>
</feature>
<feature type="region of interest" description="Involved in Mg(2+) ion dislocation from EF-Tu" evidence="1">
    <location>
        <begin position="80"/>
        <end position="83"/>
    </location>
</feature>
<dbReference type="EMBL" id="CP000962">
    <property type="protein sequence ID" value="ACA54384.1"/>
    <property type="molecule type" value="Genomic_DNA"/>
</dbReference>
<dbReference type="RefSeq" id="WP_012342498.1">
    <property type="nucleotide sequence ID" value="NC_010520.1"/>
</dbReference>
<dbReference type="SMR" id="B1KWM4"/>
<dbReference type="KEGG" id="cbl:CLK_1811"/>
<dbReference type="HOGENOM" id="CLU_047155_0_0_9"/>
<dbReference type="GO" id="GO:0005737">
    <property type="term" value="C:cytoplasm"/>
    <property type="evidence" value="ECO:0007669"/>
    <property type="project" value="UniProtKB-SubCell"/>
</dbReference>
<dbReference type="GO" id="GO:0003746">
    <property type="term" value="F:translation elongation factor activity"/>
    <property type="evidence" value="ECO:0007669"/>
    <property type="project" value="UniProtKB-UniRule"/>
</dbReference>
<dbReference type="CDD" id="cd14275">
    <property type="entry name" value="UBA_EF-Ts"/>
    <property type="match status" value="1"/>
</dbReference>
<dbReference type="FunFam" id="1.10.286.20:FF:000001">
    <property type="entry name" value="Elongation factor Ts"/>
    <property type="match status" value="1"/>
</dbReference>
<dbReference type="FunFam" id="1.10.8.10:FF:000001">
    <property type="entry name" value="Elongation factor Ts"/>
    <property type="match status" value="1"/>
</dbReference>
<dbReference type="Gene3D" id="1.10.286.20">
    <property type="match status" value="1"/>
</dbReference>
<dbReference type="Gene3D" id="1.10.8.10">
    <property type="entry name" value="DNA helicase RuvA subunit, C-terminal domain"/>
    <property type="match status" value="1"/>
</dbReference>
<dbReference type="Gene3D" id="3.30.479.20">
    <property type="entry name" value="Elongation factor Ts, dimerisation domain"/>
    <property type="match status" value="2"/>
</dbReference>
<dbReference type="HAMAP" id="MF_00050">
    <property type="entry name" value="EF_Ts"/>
    <property type="match status" value="1"/>
</dbReference>
<dbReference type="InterPro" id="IPR036402">
    <property type="entry name" value="EF-Ts_dimer_sf"/>
</dbReference>
<dbReference type="InterPro" id="IPR001816">
    <property type="entry name" value="Transl_elong_EFTs/EF1B"/>
</dbReference>
<dbReference type="InterPro" id="IPR014039">
    <property type="entry name" value="Transl_elong_EFTs/EF1B_dimer"/>
</dbReference>
<dbReference type="InterPro" id="IPR018101">
    <property type="entry name" value="Transl_elong_Ts_CS"/>
</dbReference>
<dbReference type="InterPro" id="IPR009060">
    <property type="entry name" value="UBA-like_sf"/>
</dbReference>
<dbReference type="NCBIfam" id="TIGR00116">
    <property type="entry name" value="tsf"/>
    <property type="match status" value="1"/>
</dbReference>
<dbReference type="PANTHER" id="PTHR11741">
    <property type="entry name" value="ELONGATION FACTOR TS"/>
    <property type="match status" value="1"/>
</dbReference>
<dbReference type="PANTHER" id="PTHR11741:SF0">
    <property type="entry name" value="ELONGATION FACTOR TS, MITOCHONDRIAL"/>
    <property type="match status" value="1"/>
</dbReference>
<dbReference type="Pfam" id="PF00889">
    <property type="entry name" value="EF_TS"/>
    <property type="match status" value="1"/>
</dbReference>
<dbReference type="SUPFAM" id="SSF54713">
    <property type="entry name" value="Elongation factor Ts (EF-Ts), dimerisation domain"/>
    <property type="match status" value="2"/>
</dbReference>
<dbReference type="SUPFAM" id="SSF46934">
    <property type="entry name" value="UBA-like"/>
    <property type="match status" value="1"/>
</dbReference>
<dbReference type="PROSITE" id="PS01126">
    <property type="entry name" value="EF_TS_1"/>
    <property type="match status" value="1"/>
</dbReference>
<keyword id="KW-0963">Cytoplasm</keyword>
<keyword id="KW-0251">Elongation factor</keyword>
<keyword id="KW-0648">Protein biosynthesis</keyword>
<sequence>MISAKMVKDLREKTGAGMMDCKKALTECDGDLEKAVEVLREKGLAAAAKKSGRVAAEGIVSTYISEDMKNGSIVEFNCETDFVSVNELFVELANNLSKQAAFSNVSTAEELLEEKYIADESKLVKDVITELIAKLGENMNLRRIAKLSVDKGVIKSYIHGGGRIGVLVKLACEKEDAKLAEIAKDVAMQVAATNPLFLNRDGVDTDTLEKEKEIYRVQALNEGKPEKVVEKMVMGRINKYYKENCLVEQLWVKNGDYTITKYLQEQSKEIGADITVEAFVRYEKGEGIEKKEEDFAEEVQRQMNQGK</sequence>
<organism>
    <name type="scientific">Clostridium botulinum (strain Loch Maree / Type A3)</name>
    <dbReference type="NCBI Taxonomy" id="498214"/>
    <lineage>
        <taxon>Bacteria</taxon>
        <taxon>Bacillati</taxon>
        <taxon>Bacillota</taxon>
        <taxon>Clostridia</taxon>
        <taxon>Eubacteriales</taxon>
        <taxon>Clostridiaceae</taxon>
        <taxon>Clostridium</taxon>
    </lineage>
</organism>
<evidence type="ECO:0000255" key="1">
    <source>
        <dbReference type="HAMAP-Rule" id="MF_00050"/>
    </source>
</evidence>
<proteinExistence type="inferred from homology"/>
<name>EFTS_CLOBM</name>
<accession>B1KWM4</accession>